<sequence length="104" mass="10866">MFVDVGLLHSGANESHYAGEHAHGGADQLSRGPLLSGMFGTFPVAQTFHDAVGAAHAQQMRNLHAHRQALITVGEKARHAATGFTDMDDGNAAELKAVVCSCAT</sequence>
<name>Y2078_MYCTO</name>
<proteinExistence type="predicted"/>
<protein>
    <recommendedName>
        <fullName>Uncharacterized protein MT2139</fullName>
    </recommendedName>
</protein>
<accession>P9WLK8</accession>
<accession>L0T8Q5</accession>
<accession>Q10686</accession>
<keyword id="KW-1185">Reference proteome</keyword>
<gene>
    <name type="ordered locus">MT2139</name>
</gene>
<reference key="1">
    <citation type="journal article" date="2002" name="J. Bacteriol.">
        <title>Whole-genome comparison of Mycobacterium tuberculosis clinical and laboratory strains.</title>
        <authorList>
            <person name="Fleischmann R.D."/>
            <person name="Alland D."/>
            <person name="Eisen J.A."/>
            <person name="Carpenter L."/>
            <person name="White O."/>
            <person name="Peterson J.D."/>
            <person name="DeBoy R.T."/>
            <person name="Dodson R.J."/>
            <person name="Gwinn M.L."/>
            <person name="Haft D.H."/>
            <person name="Hickey E.K."/>
            <person name="Kolonay J.F."/>
            <person name="Nelson W.C."/>
            <person name="Umayam L.A."/>
            <person name="Ermolaeva M.D."/>
            <person name="Salzberg S.L."/>
            <person name="Delcher A."/>
            <person name="Utterback T.R."/>
            <person name="Weidman J.F."/>
            <person name="Khouri H.M."/>
            <person name="Gill J."/>
            <person name="Mikula A."/>
            <person name="Bishai W."/>
            <person name="Jacobs W.R. Jr."/>
            <person name="Venter J.C."/>
            <person name="Fraser C.M."/>
        </authorList>
    </citation>
    <scope>NUCLEOTIDE SEQUENCE [LARGE SCALE GENOMIC DNA]</scope>
    <source>
        <strain>CDC 1551 / Oshkosh</strain>
    </source>
</reference>
<dbReference type="EMBL" id="AE000516">
    <property type="protein sequence ID" value="AAK46421.1"/>
    <property type="molecule type" value="Genomic_DNA"/>
</dbReference>
<dbReference type="PIR" id="A70766">
    <property type="entry name" value="A70766"/>
</dbReference>
<dbReference type="RefSeq" id="WP_003410700.1">
    <property type="nucleotide sequence ID" value="NZ_KK341227.1"/>
</dbReference>
<dbReference type="SMR" id="P9WLK8"/>
<dbReference type="KEGG" id="mtc:MT2139"/>
<dbReference type="PATRIC" id="fig|83331.31.peg.2308"/>
<dbReference type="HOGENOM" id="CLU_171780_0_0_11"/>
<dbReference type="Proteomes" id="UP000001020">
    <property type="component" value="Chromosome"/>
</dbReference>
<dbReference type="InterPro" id="IPR022534">
    <property type="entry name" value="DUF2563"/>
</dbReference>
<dbReference type="Pfam" id="PF10817">
    <property type="entry name" value="DUF2563"/>
    <property type="match status" value="1"/>
</dbReference>
<organism>
    <name type="scientific">Mycobacterium tuberculosis (strain CDC 1551 / Oshkosh)</name>
    <dbReference type="NCBI Taxonomy" id="83331"/>
    <lineage>
        <taxon>Bacteria</taxon>
        <taxon>Bacillati</taxon>
        <taxon>Actinomycetota</taxon>
        <taxon>Actinomycetes</taxon>
        <taxon>Mycobacteriales</taxon>
        <taxon>Mycobacteriaceae</taxon>
        <taxon>Mycobacterium</taxon>
        <taxon>Mycobacterium tuberculosis complex</taxon>
    </lineage>
</organism>
<feature type="chain" id="PRO_0000427461" description="Uncharacterized protein MT2139">
    <location>
        <begin position="1"/>
        <end position="104"/>
    </location>
</feature>